<name>3SX1_DENPO</name>
<feature type="signal peptide" evidence="1">
    <location>
        <begin position="1"/>
        <end position="21"/>
    </location>
</feature>
<feature type="chain" id="PRO_0000420360" description="Mambalgin-1" evidence="1">
    <location>
        <begin position="22"/>
        <end position="78"/>
    </location>
</feature>
<feature type="site" description="Important residue for inhibition of rat ASIC1a" evidence="4">
    <location>
        <position position="48"/>
    </location>
</feature>
<feature type="site" description="Important residue for inhibition of rat ASIC1a" evidence="4">
    <location>
        <position position="49"/>
    </location>
</feature>
<feature type="site" description="Key residue for inhibition of rat ASIC1a, probably binds to rat ASIC1a F-350" evidence="4">
    <location>
        <position position="53"/>
    </location>
</feature>
<feature type="site" description="Important residue for inhibition of rat ASIC1a" evidence="4">
    <location>
        <position position="54"/>
    </location>
</feature>
<feature type="site" description="Important residue for inhibition of rat ASIC1a" evidence="4">
    <location>
        <position position="55"/>
    </location>
</feature>
<feature type="disulfide bond" evidence="3 4 9 10 11 12">
    <location>
        <begin position="24"/>
        <end position="40"/>
    </location>
</feature>
<feature type="disulfide bond" evidence="3 4 9 10 11 12">
    <location>
        <begin position="33"/>
        <end position="58"/>
    </location>
</feature>
<feature type="disulfide bond" evidence="3 4 9 10 11 12">
    <location>
        <begin position="62"/>
        <end position="70"/>
    </location>
</feature>
<feature type="disulfide bond" evidence="3 4 9 10 11 12">
    <location>
        <begin position="71"/>
        <end position="76"/>
    </location>
</feature>
<feature type="mutagenesis site" description="Small increase in inhibitory potency on cASIC1a." evidence="5">
    <original>Q</original>
    <variation>A</variation>
    <location>
        <position position="26"/>
    </location>
</feature>
<feature type="mutagenesis site" description="Important decrease in inhibitory potency on cASIC1a." evidence="5">
    <original>H</original>
    <variation>A</variation>
    <location>
        <position position="27"/>
    </location>
</feature>
<feature type="mutagenesis site" description="No change in inhibitory potency on cASIC1a." evidence="5">
    <original>K</original>
    <variation>A</variation>
    <location>
        <position position="29"/>
    </location>
</feature>
<feature type="mutagenesis site" description="3.1-fold decrease in inhibitory potency of ASIC1a." evidence="4">
    <original>H</original>
    <variation>A</variation>
    <location>
        <position position="42"/>
    </location>
</feature>
<feature type="mutagenesis site" description="3.9-fold decrease in inhibitory potency of ASIC1a." evidence="4">
    <original>T</original>
    <variation>A</variation>
    <location>
        <position position="44"/>
    </location>
</feature>
<feature type="mutagenesis site" description="Important (34-fold) decrease in inhibitory potency of ASIC1a." evidence="4 5">
    <original>F</original>
    <variation>A</variation>
    <location>
        <position position="48"/>
    </location>
</feature>
<feature type="mutagenesis site" description="Important (19-fold) decrease in inhibitory potency of ASIC1a." evidence="4 5">
    <original>R</original>
    <variation>A</variation>
    <location>
        <position position="49"/>
    </location>
</feature>
<feature type="mutagenesis site" description="2.8-fold decrease in inhibitory potency of ASIC1a." evidence="4">
    <original>N</original>
    <variation>A</variation>
    <location>
        <position position="50"/>
    </location>
</feature>
<feature type="mutagenesis site" description="5.1-fold decrease in inhibitory potency of ASIC1a." evidence="4">
    <original>L</original>
    <variation>A</variation>
    <location>
        <position position="51"/>
    </location>
</feature>
<feature type="mutagenesis site" description="4.9-fold decrease in inhibitory potency of ASIC1a." evidence="4">
    <original>K</original>
    <variation>A</variation>
    <location>
        <position position="52"/>
    </location>
</feature>
<feature type="mutagenesis site" description="2200-fold decrease in inhibitory potency of ASIC1a." evidence="4">
    <original>L</original>
    <variation>A</variation>
    <location>
        <position position="53"/>
    </location>
</feature>
<feature type="mutagenesis site" description="16.3-fold decrease in inhibitory potency of ASIC1a." evidence="4">
    <original>I</original>
    <variation>A</variation>
    <location>
        <position position="54"/>
    </location>
</feature>
<feature type="mutagenesis site" description="58-fold decrease in inhibitory potency of ASIC1a." evidence="4">
    <original>L</original>
    <variation>A</variation>
    <location>
        <position position="55"/>
    </location>
</feature>
<feature type="mutagenesis site" description="1.5-fold decrease in inhibitory potency of ASIC1a." evidence="4">
    <original>K</original>
    <variation>A</variation>
    <location>
        <position position="78"/>
    </location>
</feature>
<feature type="strand" evidence="13">
    <location>
        <begin position="23"/>
        <end position="26"/>
    </location>
</feature>
<feature type="strand" evidence="13">
    <location>
        <begin position="29"/>
        <end position="32"/>
    </location>
</feature>
<feature type="strand" evidence="13">
    <location>
        <begin position="39"/>
        <end position="48"/>
    </location>
</feature>
<feature type="strand" evidence="13">
    <location>
        <begin position="51"/>
        <end position="60"/>
    </location>
</feature>
<feature type="helix" evidence="13">
    <location>
        <begin position="64"/>
        <end position="69"/>
    </location>
</feature>
<feature type="turn" evidence="13">
    <location>
        <begin position="74"/>
        <end position="77"/>
    </location>
</feature>
<reference key="1">
    <citation type="journal article" date="2012" name="Nature">
        <title>Black mamba venom peptides target acid-sensing ion channels to abolish pain.</title>
        <authorList>
            <person name="Diochot S."/>
            <person name="Baron A."/>
            <person name="Salinas M."/>
            <person name="Douguet D."/>
            <person name="Scarzello S."/>
            <person name="Dabert-Gay A.-S."/>
            <person name="Debayle D."/>
            <person name="Friend V."/>
            <person name="Alloui A."/>
            <person name="Lazdunski M."/>
            <person name="Lingueglia E."/>
        </authorList>
    </citation>
    <scope>NUCLEOTIDE SEQUENCE [MRNA]</scope>
    <scope>PROTEIN SEQUENCE OF 22-78</scope>
    <scope>FUNCTION</scope>
    <scope>BIOASSAY</scope>
    <scope>PHARMACEUTICAL</scope>
    <scope>MASS SPECTROMETRY</scope>
    <scope>3D-STRUCTURE MODELING</scope>
    <scope>SUBCELLULAR LOCATION</scope>
    <source>
        <tissue>Venom</tissue>
        <tissue>Venom gland</tissue>
    </source>
</reference>
<reference key="2">
    <citation type="journal article" date="2013" name="Toxicon">
        <title>Venom toxins in the exploration of molecular, physiological and pathophysiological functions of acid-sensing ion channels.</title>
        <authorList>
            <person name="Baron A."/>
            <person name="Diochot S."/>
            <person name="Salinas M."/>
            <person name="Deval E."/>
            <person name="Noel J."/>
            <person name="Lingueglia E."/>
        </authorList>
    </citation>
    <scope>FUNCTION</scope>
    <scope>REVIEW</scope>
</reference>
<reference key="3">
    <citation type="journal article" date="2015" name="Chem. Commun. (Camb.)">
        <title>Site-specific fluorescence spectrum detection and characterization of hASIC1a channels upon toxin mambalgin-1 binding in live mammalian cells.</title>
        <authorList>
            <person name="Wen M."/>
            <person name="Guo X."/>
            <person name="Sun P."/>
            <person name="Xiao L."/>
            <person name="Li J."/>
            <person name="Xiong Y."/>
            <person name="Bao J."/>
            <person name="Xue T."/>
            <person name="Zhang L."/>
            <person name="Tian C."/>
        </authorList>
    </citation>
    <scope>FUNCTION</scope>
</reference>
<reference key="4">
    <citation type="journal article" date="2016" name="Pain">
        <title>Analgesic effects of mambalgin peptide inhibitors of acid-sensing ion channels in inflammatory and neuropathic pain.</title>
        <authorList>
            <person name="Diochot S."/>
            <person name="Alloui A."/>
            <person name="Rodrigues P."/>
            <person name="Dauvois M."/>
            <person name="Friend V."/>
            <person name="Aissouni Y."/>
            <person name="Eschalier A."/>
            <person name="Lingueglia E."/>
            <person name="Baron A."/>
        </authorList>
    </citation>
    <scope>FUNCTION</scope>
    <scope>BIOASSAY</scope>
</reference>
<reference key="5">
    <citation type="journal article" date="2014" name="Chem. Commun. (Camb.)">
        <title>One-pot hydrazide-based native chemical ligation for efficient chemical synthesis and structure determination of toxin Mambalgin-1.</title>
        <authorList>
            <person name="Pan M."/>
            <person name="He Y."/>
            <person name="Wen M."/>
            <person name="Wu F."/>
            <person name="Sun D."/>
            <person name="Li S."/>
            <person name="Zhang L."/>
            <person name="Li Y."/>
            <person name="Tian C."/>
        </authorList>
    </citation>
    <scope>STRUCTURE BY NMR OF 22-78</scope>
    <scope>FUNCTION</scope>
    <scope>DISULFIDE BOND</scope>
    <scope>SYNTHESIS OF 22-78</scope>
</reference>
<reference key="6">
    <citation type="journal article" date="2016" name="J. Biol. Chem.">
        <title>Mambalgin-1 pain-relieving peptide, stepwise solid-phase synthesis, crystal structure, and functional domain for acid-sensing ion channel 1a inhibition.</title>
        <authorList>
            <person name="Mourier G."/>
            <person name="Salinas M."/>
            <person name="Kessler P."/>
            <person name="Stura E.A."/>
            <person name="Leblanc M."/>
            <person name="Tepshi L."/>
            <person name="Besson T."/>
            <person name="Diochot S."/>
            <person name="Baron A."/>
            <person name="Douguet D."/>
            <person name="Lingueglia E."/>
            <person name="Servent D."/>
        </authorList>
    </citation>
    <scope>X-RAY CRYSTALLOGRAPHY (1.8 ANGSTROMS) OF 22-78</scope>
    <scope>X-RAY CRYSTALLOGRAPHY (1.7 ANGSTROMS) OF MUTANT T44A</scope>
    <scope>FUNCTION</scope>
    <scope>SYNTHESIS OF 22-78</scope>
    <scope>DISULFIDE BOND</scope>
    <scope>MUTAGENESIS OF HIS-42; THR-44; PHE-48; ARG-49; ASN-50; LEU-51; LYS-52; LEU-53; ILE-54; LEU-55 AND LYS-78</scope>
</reference>
<reference key="7">
    <citation type="journal article" date="2018" name="Cell Discov.">
        <title>Cryo-EM structure of the ASIC1a-mambalgin-1 complex reveals that the peptide toxin mambalgin-1 inhibits acid-sensing ion channels through an unusual allosteric effect.</title>
        <authorList>
            <person name="Sun D."/>
            <person name="Yu Y."/>
            <person name="Xue X."/>
            <person name="Pan M."/>
            <person name="Wen M."/>
            <person name="Li S."/>
            <person name="Qu Q."/>
            <person name="Li X."/>
            <person name="Zhang L."/>
            <person name="Li X."/>
            <person name="Liu L."/>
            <person name="Yang M."/>
            <person name="Tian C."/>
        </authorList>
    </citation>
    <scope>STRUCTURE BY ELECTRON MICROSCOPY (5.4 ANGSTROMS) OF 22-78 IN COMPLEX WITH CHICKEN ASIC1A</scope>
    <scope>SYNTHESIS OF 22-78</scope>
    <scope>MUTAGENESIS OF GLN-26; HIS-27; LYS-29; PHE-48 AND ARG-49</scope>
</reference>
<organism>
    <name type="scientific">Dendroaspis polylepis polylepis</name>
    <name type="common">Black mamba</name>
    <dbReference type="NCBI Taxonomy" id="8620"/>
    <lineage>
        <taxon>Eukaryota</taxon>
        <taxon>Metazoa</taxon>
        <taxon>Chordata</taxon>
        <taxon>Craniata</taxon>
        <taxon>Vertebrata</taxon>
        <taxon>Euteleostomi</taxon>
        <taxon>Lepidosauria</taxon>
        <taxon>Squamata</taxon>
        <taxon>Bifurcata</taxon>
        <taxon>Unidentata</taxon>
        <taxon>Episquamata</taxon>
        <taxon>Toxicofera</taxon>
        <taxon>Serpentes</taxon>
        <taxon>Colubroidea</taxon>
        <taxon>Elapidae</taxon>
        <taxon>Elapinae</taxon>
        <taxon>Dendroaspis</taxon>
    </lineage>
</organism>
<keyword id="KW-0002">3D-structure</keyword>
<keyword id="KW-0903">Direct protein sequencing</keyword>
<keyword id="KW-1015">Disulfide bond</keyword>
<keyword id="KW-0872">Ion channel impairing toxin</keyword>
<keyword id="KW-0582">Pharmaceutical</keyword>
<keyword id="KW-1275">Proton-gated sodium channel impairing toxin</keyword>
<keyword id="KW-0964">Secreted</keyword>
<keyword id="KW-0732">Signal</keyword>
<keyword id="KW-0800">Toxin</keyword>
<comment type="function">
    <text evidence="1 2 3 4 5">This three-finger toxin inhibits ASIC channels. It acts as a gating modifier toxin by decreasing the apparent proton sensitivity of activation and by slightly increasing the apparent proton sensitivity for inactivation (PubMed:23034652). It binds more tightly to the closed state and to a much lesser extent the inactivated/desensitized state of ASIC1a isoform of ASIC1 (PubMed:23034652). It interacts directly with the outside surface of the thumb domain of chicken ASIC1a (ASIC1a), but does not insert into the acidic pocket as suggested for mambalgin-2 (PubMed:29872539). This binding leads to relocation of the thumb domain that could disrupt the acidic pocket of cASIC1a (PubMed:29872539). It reversibly inhibits rat ASIC1a (IC(50)=3.4-55 nM), rat ASIC1a-ASIC2b (IC(50)=61 nM), rat ASIC1a-ASIC1b (IC(50)=72 nM), human ASIC1a (IC(50)=127-580 nM), chicken ASIC1a (IC(50)=123.6 nM), rat ASIC1b (IC(50)=22.2-203 nM), rat ASIC1a-ASIC2a (IC(50)=152-252 nM) (PubMed:23034652, PubMed:23624383, PubMed:24619065, PubMed:25873388, PubMed:26680001, PubMed:29872539). In vivo, it shows a potent naloxone-resistant analgesic effect against acute and inflammatory pain upon central and peripheral injection (PubMed:23034652). In addition, it also has an opioid-independent effect on both thermal and mechanical inflammatory pain after systemic administration and is effective against neuropathic pain (PubMed:26680001).</text>
</comment>
<comment type="subcellular location">
    <subcellularLocation>
        <location evidence="1">Secreted</location>
    </subcellularLocation>
</comment>
<comment type="tissue specificity">
    <text evidence="7">Expressed by the venom gland.</text>
</comment>
<comment type="mass spectrometry">
    <text>Average mass.</text>
</comment>
<comment type="pharmaceutical">
    <text evidence="8">Promising peptide that shows a potent analgesic effect against acute and inflammatory pain that can be as strong as morphine but resistant to naloxone, with much less tolerance and no respiratory distress.</text>
</comment>
<comment type="miscellaneous">
    <text evidence="1">Negative results: has no effect on rat ASIC2a, rat ASIC3, rat ASIC1a-ASIC3 and rat ASIC1b-ASIC3 channels, as well as on TRPV1, P2RX2 (P2X2), HTR3A (5-HT3A), Nav1.8 (SCN10A), Cav3.2 (CACNA1H) and Kv1.2 (KCNA2) channels (PubMed:23034652). Does not produce motor dysfunction, apathy, flaccid paralysis, convulsions or death upon central injections (intrathecal or intracerebroventricular) in mice (PubMed:23034652).</text>
</comment>
<comment type="similarity">
    <text evidence="7">Belongs to the three-finger toxin family. Short-chain subfamily. Mambalgin sub-subfamily.</text>
</comment>
<proteinExistence type="evidence at protein level"/>
<protein>
    <recommendedName>
        <fullName evidence="6">Mambalgin-1</fullName>
        <shortName evidence="6">Mamb-1</shortName>
    </recommendedName>
    <alternativeName>
        <fullName evidence="6">Pi-Dp1</fullName>
    </alternativeName>
</protein>
<evidence type="ECO:0000269" key="1">
    <source>
    </source>
</evidence>
<evidence type="ECO:0000269" key="2">
    <source>
    </source>
</evidence>
<evidence type="ECO:0000269" key="3">
    <source>
    </source>
</evidence>
<evidence type="ECO:0000269" key="4">
    <source>
    </source>
</evidence>
<evidence type="ECO:0000269" key="5">
    <source>
    </source>
</evidence>
<evidence type="ECO:0000303" key="6">
    <source>
    </source>
</evidence>
<evidence type="ECO:0000305" key="7"/>
<evidence type="ECO:0000305" key="8">
    <source>
    </source>
</evidence>
<evidence type="ECO:0000312" key="9">
    <source>
        <dbReference type="PDB" id="2MJY"/>
    </source>
</evidence>
<evidence type="ECO:0000312" key="10">
    <source>
        <dbReference type="PDB" id="5DO6"/>
    </source>
</evidence>
<evidence type="ECO:0000312" key="11">
    <source>
        <dbReference type="PDB" id="5DU1"/>
    </source>
</evidence>
<evidence type="ECO:0000312" key="12">
    <source>
        <dbReference type="PDB" id="5DZ5"/>
    </source>
</evidence>
<evidence type="ECO:0007829" key="13">
    <source>
        <dbReference type="PDB" id="5DO6"/>
    </source>
</evidence>
<sequence>MKTLLLTLLVVTIVCLDLGYSLKCYQHGKVVTCHRDMKFCYHNTGMPFRNLKLILQGCSSSCSETENNKCCSTDRCNK</sequence>
<dbReference type="EMBL" id="JX428743">
    <property type="protein sequence ID" value="AFT65615.1"/>
    <property type="molecule type" value="mRNA"/>
</dbReference>
<dbReference type="PDB" id="2MJY">
    <property type="method" value="NMR"/>
    <property type="chains" value="A=22-78"/>
</dbReference>
<dbReference type="PDB" id="5DO6">
    <property type="method" value="X-ray"/>
    <property type="resolution" value="1.70 A"/>
    <property type="chains" value="A/B=22-78"/>
</dbReference>
<dbReference type="PDB" id="5DU1">
    <property type="method" value="X-ray"/>
    <property type="resolution" value="1.80 A"/>
    <property type="chains" value="A/B/C/D=22-78"/>
</dbReference>
<dbReference type="PDB" id="5DZ5">
    <property type="method" value="X-ray"/>
    <property type="resolution" value="1.95 A"/>
    <property type="chains" value="A/B=22-78"/>
</dbReference>
<dbReference type="PDB" id="7CFT">
    <property type="method" value="EM"/>
    <property type="resolution" value="3.90 A"/>
    <property type="chains" value="D/E/F=22-78"/>
</dbReference>
<dbReference type="PDBsum" id="2MJY"/>
<dbReference type="PDBsum" id="5DO6"/>
<dbReference type="PDBsum" id="5DU1"/>
<dbReference type="PDBsum" id="5DZ5"/>
<dbReference type="PDBsum" id="7CFT"/>
<dbReference type="BMRB" id="P0DKR6"/>
<dbReference type="EMDB" id="EMD-30347"/>
<dbReference type="SMR" id="P0DKR6"/>
<dbReference type="TCDB" id="8.B.23.1.1">
    <property type="family name" value="the mambalgin (mambalgin) family"/>
</dbReference>
<dbReference type="EvolutionaryTrace" id="P0DKR6"/>
<dbReference type="GO" id="GO:0005576">
    <property type="term" value="C:extracellular region"/>
    <property type="evidence" value="ECO:0007669"/>
    <property type="project" value="UniProtKB-SubCell"/>
</dbReference>
<dbReference type="GO" id="GO:0099106">
    <property type="term" value="F:ion channel regulator activity"/>
    <property type="evidence" value="ECO:0007669"/>
    <property type="project" value="UniProtKB-KW"/>
</dbReference>
<dbReference type="GO" id="GO:0090729">
    <property type="term" value="F:toxin activity"/>
    <property type="evidence" value="ECO:0007669"/>
    <property type="project" value="UniProtKB-KW"/>
</dbReference>
<dbReference type="CDD" id="cd00206">
    <property type="entry name" value="TFP_snake_toxin"/>
    <property type="match status" value="1"/>
</dbReference>
<dbReference type="Gene3D" id="2.10.60.10">
    <property type="entry name" value="CD59"/>
    <property type="match status" value="1"/>
</dbReference>
<dbReference type="InterPro" id="IPR003571">
    <property type="entry name" value="Snake_3FTx"/>
</dbReference>
<dbReference type="InterPro" id="IPR045860">
    <property type="entry name" value="Snake_toxin-like_sf"/>
</dbReference>
<dbReference type="InterPro" id="IPR054131">
    <property type="entry name" value="Toxin_cobra-type"/>
</dbReference>
<dbReference type="Pfam" id="PF21947">
    <property type="entry name" value="Toxin_cobra-type"/>
    <property type="match status" value="1"/>
</dbReference>
<dbReference type="SUPFAM" id="SSF57302">
    <property type="entry name" value="Snake toxin-like"/>
    <property type="match status" value="1"/>
</dbReference>
<accession>P0DKR6</accession>
<accession>B3EWQ5</accession>
<accession>K0C0K0</accession>